<name>DER_SHEB5</name>
<evidence type="ECO:0000255" key="1">
    <source>
        <dbReference type="HAMAP-Rule" id="MF_00195"/>
    </source>
</evidence>
<evidence type="ECO:0000256" key="2">
    <source>
        <dbReference type="SAM" id="MobiDB-lite"/>
    </source>
</evidence>
<protein>
    <recommendedName>
        <fullName evidence="1">GTPase Der</fullName>
    </recommendedName>
    <alternativeName>
        <fullName evidence="1">GTP-binding protein EngA</fullName>
    </alternativeName>
</protein>
<dbReference type="EMBL" id="CP000563">
    <property type="protein sequence ID" value="ABN62468.1"/>
    <property type="molecule type" value="Genomic_DNA"/>
</dbReference>
<dbReference type="RefSeq" id="WP_011847341.1">
    <property type="nucleotide sequence ID" value="NC_009052.1"/>
</dbReference>
<dbReference type="SMR" id="A3D6V5"/>
<dbReference type="STRING" id="325240.Sbal_2986"/>
<dbReference type="KEGG" id="sbl:Sbal_2986"/>
<dbReference type="HOGENOM" id="CLU_016077_5_1_6"/>
<dbReference type="OrthoDB" id="9805918at2"/>
<dbReference type="Proteomes" id="UP000001557">
    <property type="component" value="Chromosome"/>
</dbReference>
<dbReference type="GO" id="GO:0005525">
    <property type="term" value="F:GTP binding"/>
    <property type="evidence" value="ECO:0007669"/>
    <property type="project" value="UniProtKB-UniRule"/>
</dbReference>
<dbReference type="GO" id="GO:0043022">
    <property type="term" value="F:ribosome binding"/>
    <property type="evidence" value="ECO:0007669"/>
    <property type="project" value="TreeGrafter"/>
</dbReference>
<dbReference type="GO" id="GO:0042254">
    <property type="term" value="P:ribosome biogenesis"/>
    <property type="evidence" value="ECO:0007669"/>
    <property type="project" value="UniProtKB-KW"/>
</dbReference>
<dbReference type="CDD" id="cd01894">
    <property type="entry name" value="EngA1"/>
    <property type="match status" value="1"/>
</dbReference>
<dbReference type="CDD" id="cd01895">
    <property type="entry name" value="EngA2"/>
    <property type="match status" value="1"/>
</dbReference>
<dbReference type="FunFam" id="3.30.300.20:FF:000004">
    <property type="entry name" value="GTPase Der"/>
    <property type="match status" value="1"/>
</dbReference>
<dbReference type="FunFam" id="3.40.50.300:FF:000040">
    <property type="entry name" value="GTPase Der"/>
    <property type="match status" value="1"/>
</dbReference>
<dbReference type="FunFam" id="3.40.50.300:FF:000057">
    <property type="entry name" value="GTPase Der"/>
    <property type="match status" value="1"/>
</dbReference>
<dbReference type="Gene3D" id="3.30.300.20">
    <property type="match status" value="1"/>
</dbReference>
<dbReference type="Gene3D" id="3.40.50.300">
    <property type="entry name" value="P-loop containing nucleotide triphosphate hydrolases"/>
    <property type="match status" value="2"/>
</dbReference>
<dbReference type="HAMAP" id="MF_00195">
    <property type="entry name" value="GTPase_Der"/>
    <property type="match status" value="1"/>
</dbReference>
<dbReference type="InterPro" id="IPR031166">
    <property type="entry name" value="G_ENGA"/>
</dbReference>
<dbReference type="InterPro" id="IPR006073">
    <property type="entry name" value="GTP-bd"/>
</dbReference>
<dbReference type="InterPro" id="IPR016484">
    <property type="entry name" value="GTPase_Der"/>
</dbReference>
<dbReference type="InterPro" id="IPR032859">
    <property type="entry name" value="KH_dom-like"/>
</dbReference>
<dbReference type="InterPro" id="IPR015946">
    <property type="entry name" value="KH_dom-like_a/b"/>
</dbReference>
<dbReference type="InterPro" id="IPR027417">
    <property type="entry name" value="P-loop_NTPase"/>
</dbReference>
<dbReference type="InterPro" id="IPR005225">
    <property type="entry name" value="Small_GTP-bd"/>
</dbReference>
<dbReference type="NCBIfam" id="TIGR03594">
    <property type="entry name" value="GTPase_EngA"/>
    <property type="match status" value="1"/>
</dbReference>
<dbReference type="NCBIfam" id="TIGR00231">
    <property type="entry name" value="small_GTP"/>
    <property type="match status" value="2"/>
</dbReference>
<dbReference type="PANTHER" id="PTHR43834">
    <property type="entry name" value="GTPASE DER"/>
    <property type="match status" value="1"/>
</dbReference>
<dbReference type="PANTHER" id="PTHR43834:SF6">
    <property type="entry name" value="GTPASE DER"/>
    <property type="match status" value="1"/>
</dbReference>
<dbReference type="Pfam" id="PF14714">
    <property type="entry name" value="KH_dom-like"/>
    <property type="match status" value="1"/>
</dbReference>
<dbReference type="Pfam" id="PF01926">
    <property type="entry name" value="MMR_HSR1"/>
    <property type="match status" value="2"/>
</dbReference>
<dbReference type="PIRSF" id="PIRSF006485">
    <property type="entry name" value="GTP-binding_EngA"/>
    <property type="match status" value="1"/>
</dbReference>
<dbReference type="PRINTS" id="PR00326">
    <property type="entry name" value="GTP1OBG"/>
</dbReference>
<dbReference type="SUPFAM" id="SSF52540">
    <property type="entry name" value="P-loop containing nucleoside triphosphate hydrolases"/>
    <property type="match status" value="2"/>
</dbReference>
<dbReference type="PROSITE" id="PS51712">
    <property type="entry name" value="G_ENGA"/>
    <property type="match status" value="2"/>
</dbReference>
<comment type="function">
    <text evidence="1">GTPase that plays an essential role in the late steps of ribosome biogenesis.</text>
</comment>
<comment type="subunit">
    <text evidence="1">Associates with the 50S ribosomal subunit.</text>
</comment>
<comment type="similarity">
    <text evidence="1">Belongs to the TRAFAC class TrmE-Era-EngA-EngB-Septin-like GTPase superfamily. EngA (Der) GTPase family.</text>
</comment>
<sequence>MIPVVALVGRPNVGKSTLFNRLTRTRDALVADFPGLTRDRKYGRAFLSGYEFIVVDTGGIDGTEEGIETKMAEQSLAAIEEADVVLFMTDARAGLTAADLSIAQHLRSREKTTFVVANKVDGIDADSACAEFWSLGLGEVYQMAASQGRGVTNMIEYALTPYAEAMGIVRQGEDEVTEEREYTEEEAEAEQKRLQDLPIKLAIIGKPNVGKSTLTNRILGEERVVVFDEPGTTRDSIYIPMEREGREYVIIDTAGVRRRSKVHQVIEKFSVIKTLKAVEDANVVLLIIDAREGIAEQDLGLLGFALNAGRALVIAVNKWDGIDQGIKDRVKSELDRRLGFIDFARIHFISALHGTGVGHLFESIEEAYDSATRRVSTSMLTRIMQMSQDDHQPPLVNGRRVKLKYAHAGGYNPPIVVIHGNQVSKLPDSYKRYMMNYFRRSLKVVGTPIQLRFQEGDNPFENKTEKLTMSQERRRKRAQSHIKDRKTK</sequence>
<keyword id="KW-0342">GTP-binding</keyword>
<keyword id="KW-0547">Nucleotide-binding</keyword>
<keyword id="KW-1185">Reference proteome</keyword>
<keyword id="KW-0677">Repeat</keyword>
<keyword id="KW-0690">Ribosome biogenesis</keyword>
<reference key="1">
    <citation type="submission" date="2007-02" db="EMBL/GenBank/DDBJ databases">
        <title>Complete sequence of chromosome of Shewanella baltica OS155.</title>
        <authorList>
            <consortium name="US DOE Joint Genome Institute"/>
            <person name="Copeland A."/>
            <person name="Lucas S."/>
            <person name="Lapidus A."/>
            <person name="Barry K."/>
            <person name="Detter J.C."/>
            <person name="Glavina del Rio T."/>
            <person name="Hammon N."/>
            <person name="Israni S."/>
            <person name="Dalin E."/>
            <person name="Tice H."/>
            <person name="Pitluck S."/>
            <person name="Sims D.R."/>
            <person name="Brettin T."/>
            <person name="Bruce D."/>
            <person name="Han C."/>
            <person name="Tapia R."/>
            <person name="Brainard J."/>
            <person name="Schmutz J."/>
            <person name="Larimer F."/>
            <person name="Land M."/>
            <person name="Hauser L."/>
            <person name="Kyrpides N."/>
            <person name="Mikhailova N."/>
            <person name="Brettar I."/>
            <person name="Klappenbach J."/>
            <person name="Konstantinidis K."/>
            <person name="Rodrigues J."/>
            <person name="Tiedje J."/>
            <person name="Richardson P."/>
        </authorList>
    </citation>
    <scope>NUCLEOTIDE SEQUENCE [LARGE SCALE GENOMIC DNA]</scope>
    <source>
        <strain>OS155 / ATCC BAA-1091</strain>
    </source>
</reference>
<gene>
    <name evidence="1" type="primary">der</name>
    <name type="synonym">engA</name>
    <name type="ordered locus">Sbal_2986</name>
</gene>
<proteinExistence type="inferred from homology"/>
<accession>A3D6V5</accession>
<organism>
    <name type="scientific">Shewanella baltica (strain OS155 / ATCC BAA-1091)</name>
    <dbReference type="NCBI Taxonomy" id="325240"/>
    <lineage>
        <taxon>Bacteria</taxon>
        <taxon>Pseudomonadati</taxon>
        <taxon>Pseudomonadota</taxon>
        <taxon>Gammaproteobacteria</taxon>
        <taxon>Alteromonadales</taxon>
        <taxon>Shewanellaceae</taxon>
        <taxon>Shewanella</taxon>
    </lineage>
</organism>
<feature type="chain" id="PRO_1000011732" description="GTPase Der">
    <location>
        <begin position="1"/>
        <end position="488"/>
    </location>
</feature>
<feature type="domain" description="EngA-type G 1">
    <location>
        <begin position="3"/>
        <end position="166"/>
    </location>
</feature>
<feature type="domain" description="EngA-type G 2">
    <location>
        <begin position="199"/>
        <end position="372"/>
    </location>
</feature>
<feature type="domain" description="KH-like" evidence="1">
    <location>
        <begin position="373"/>
        <end position="457"/>
    </location>
</feature>
<feature type="region of interest" description="Disordered" evidence="2">
    <location>
        <begin position="460"/>
        <end position="488"/>
    </location>
</feature>
<feature type="compositionally biased region" description="Basic residues" evidence="2">
    <location>
        <begin position="473"/>
        <end position="488"/>
    </location>
</feature>
<feature type="binding site" evidence="1">
    <location>
        <begin position="9"/>
        <end position="16"/>
    </location>
    <ligand>
        <name>GTP</name>
        <dbReference type="ChEBI" id="CHEBI:37565"/>
        <label>1</label>
    </ligand>
</feature>
<feature type="binding site" evidence="1">
    <location>
        <begin position="56"/>
        <end position="60"/>
    </location>
    <ligand>
        <name>GTP</name>
        <dbReference type="ChEBI" id="CHEBI:37565"/>
        <label>1</label>
    </ligand>
</feature>
<feature type="binding site" evidence="1">
    <location>
        <begin position="118"/>
        <end position="121"/>
    </location>
    <ligand>
        <name>GTP</name>
        <dbReference type="ChEBI" id="CHEBI:37565"/>
        <label>1</label>
    </ligand>
</feature>
<feature type="binding site" evidence="1">
    <location>
        <begin position="205"/>
        <end position="212"/>
    </location>
    <ligand>
        <name>GTP</name>
        <dbReference type="ChEBI" id="CHEBI:37565"/>
        <label>2</label>
    </ligand>
</feature>
<feature type="binding site" evidence="1">
    <location>
        <begin position="252"/>
        <end position="256"/>
    </location>
    <ligand>
        <name>GTP</name>
        <dbReference type="ChEBI" id="CHEBI:37565"/>
        <label>2</label>
    </ligand>
</feature>
<feature type="binding site" evidence="1">
    <location>
        <begin position="317"/>
        <end position="320"/>
    </location>
    <ligand>
        <name>GTP</name>
        <dbReference type="ChEBI" id="CHEBI:37565"/>
        <label>2</label>
    </ligand>
</feature>